<feature type="chain" id="PRO_1000008347" description="Translation initiation factor IF-2">
    <location>
        <begin position="1"/>
        <end position="705"/>
    </location>
</feature>
<feature type="domain" description="tr-type G">
    <location>
        <begin position="207"/>
        <end position="376"/>
    </location>
</feature>
<feature type="region of interest" description="Disordered" evidence="3">
    <location>
        <begin position="40"/>
        <end position="124"/>
    </location>
</feature>
<feature type="region of interest" description="G1" evidence="1">
    <location>
        <begin position="216"/>
        <end position="223"/>
    </location>
</feature>
<feature type="region of interest" description="G2" evidence="1">
    <location>
        <begin position="241"/>
        <end position="245"/>
    </location>
</feature>
<feature type="region of interest" description="G3" evidence="1">
    <location>
        <begin position="262"/>
        <end position="265"/>
    </location>
</feature>
<feature type="region of interest" description="G4" evidence="1">
    <location>
        <begin position="316"/>
        <end position="319"/>
    </location>
</feature>
<feature type="region of interest" description="G5" evidence="1">
    <location>
        <begin position="352"/>
        <end position="354"/>
    </location>
</feature>
<feature type="compositionally biased region" description="Basic and acidic residues" evidence="3">
    <location>
        <begin position="41"/>
        <end position="58"/>
    </location>
</feature>
<feature type="compositionally biased region" description="Low complexity" evidence="3">
    <location>
        <begin position="59"/>
        <end position="77"/>
    </location>
</feature>
<feature type="compositionally biased region" description="Basic residues" evidence="3">
    <location>
        <begin position="94"/>
        <end position="108"/>
    </location>
</feature>
<feature type="binding site" evidence="2">
    <location>
        <begin position="216"/>
        <end position="223"/>
    </location>
    <ligand>
        <name>GTP</name>
        <dbReference type="ChEBI" id="CHEBI:37565"/>
    </ligand>
</feature>
<feature type="binding site" evidence="2">
    <location>
        <begin position="262"/>
        <end position="266"/>
    </location>
    <ligand>
        <name>GTP</name>
        <dbReference type="ChEBI" id="CHEBI:37565"/>
    </ligand>
</feature>
<feature type="binding site" evidence="2">
    <location>
        <begin position="316"/>
        <end position="319"/>
    </location>
    <ligand>
        <name>GTP</name>
        <dbReference type="ChEBI" id="CHEBI:37565"/>
    </ligand>
</feature>
<comment type="function">
    <text evidence="2">One of the essential components for the initiation of protein synthesis. Protects formylmethionyl-tRNA from spontaneous hydrolysis and promotes its binding to the 30S ribosomal subunits. Also involved in the hydrolysis of GTP during the formation of the 70S ribosomal complex.</text>
</comment>
<comment type="subcellular location">
    <subcellularLocation>
        <location evidence="2">Cytoplasm</location>
    </subcellularLocation>
</comment>
<comment type="similarity">
    <text evidence="2">Belongs to the TRAFAC class translation factor GTPase superfamily. Classic translation factor GTPase family. IF-2 subfamily.</text>
</comment>
<gene>
    <name evidence="2" type="primary">infB</name>
    <name type="ordered locus">SAOUHSC_01246</name>
</gene>
<organism>
    <name type="scientific">Staphylococcus aureus (strain NCTC 8325 / PS 47)</name>
    <dbReference type="NCBI Taxonomy" id="93061"/>
    <lineage>
        <taxon>Bacteria</taxon>
        <taxon>Bacillati</taxon>
        <taxon>Bacillota</taxon>
        <taxon>Bacilli</taxon>
        <taxon>Bacillales</taxon>
        <taxon>Staphylococcaceae</taxon>
        <taxon>Staphylococcus</taxon>
    </lineage>
</organism>
<accession>Q2G2D0</accession>
<dbReference type="EMBL" id="CP000253">
    <property type="protein sequence ID" value="ABD30347.1"/>
    <property type="molecule type" value="Genomic_DNA"/>
</dbReference>
<dbReference type="RefSeq" id="WP_000043634.1">
    <property type="nucleotide sequence ID" value="NZ_LS483365.1"/>
</dbReference>
<dbReference type="RefSeq" id="YP_499779.1">
    <property type="nucleotide sequence ID" value="NC_007795.1"/>
</dbReference>
<dbReference type="SMR" id="Q2G2D0"/>
<dbReference type="STRING" id="93061.SAOUHSC_01246"/>
<dbReference type="PaxDb" id="1280-SAXN108_1273"/>
<dbReference type="GeneID" id="3919977"/>
<dbReference type="KEGG" id="sao:SAOUHSC_01246"/>
<dbReference type="PATRIC" id="fig|93061.5.peg.1140"/>
<dbReference type="eggNOG" id="COG0532">
    <property type="taxonomic scope" value="Bacteria"/>
</dbReference>
<dbReference type="HOGENOM" id="CLU_006301_5_1_9"/>
<dbReference type="OrthoDB" id="9811804at2"/>
<dbReference type="PRO" id="PR:Q2G2D0"/>
<dbReference type="Proteomes" id="UP000008816">
    <property type="component" value="Chromosome"/>
</dbReference>
<dbReference type="GO" id="GO:0005737">
    <property type="term" value="C:cytoplasm"/>
    <property type="evidence" value="ECO:0000318"/>
    <property type="project" value="GO_Central"/>
</dbReference>
<dbReference type="GO" id="GO:0005829">
    <property type="term" value="C:cytosol"/>
    <property type="evidence" value="ECO:0000318"/>
    <property type="project" value="GO_Central"/>
</dbReference>
<dbReference type="GO" id="GO:0005525">
    <property type="term" value="F:GTP binding"/>
    <property type="evidence" value="ECO:0007669"/>
    <property type="project" value="UniProtKB-KW"/>
</dbReference>
<dbReference type="GO" id="GO:0003924">
    <property type="term" value="F:GTPase activity"/>
    <property type="evidence" value="ECO:0007669"/>
    <property type="project" value="UniProtKB-UniRule"/>
</dbReference>
<dbReference type="GO" id="GO:0003743">
    <property type="term" value="F:translation initiation factor activity"/>
    <property type="evidence" value="ECO:0000318"/>
    <property type="project" value="GO_Central"/>
</dbReference>
<dbReference type="GO" id="GO:0006413">
    <property type="term" value="P:translational initiation"/>
    <property type="evidence" value="ECO:0000318"/>
    <property type="project" value="GO_Central"/>
</dbReference>
<dbReference type="CDD" id="cd01887">
    <property type="entry name" value="IF2_eIF5B"/>
    <property type="match status" value="1"/>
</dbReference>
<dbReference type="CDD" id="cd03702">
    <property type="entry name" value="IF2_mtIF2_II"/>
    <property type="match status" value="1"/>
</dbReference>
<dbReference type="CDD" id="cd03692">
    <property type="entry name" value="mtIF2_IVc"/>
    <property type="match status" value="1"/>
</dbReference>
<dbReference type="FunFam" id="1.10.10.2480:FF:000002">
    <property type="entry name" value="Translation initiation factor IF-2"/>
    <property type="match status" value="1"/>
</dbReference>
<dbReference type="FunFam" id="2.40.30.10:FF:000007">
    <property type="entry name" value="Translation initiation factor IF-2"/>
    <property type="match status" value="1"/>
</dbReference>
<dbReference type="FunFam" id="2.40.30.10:FF:000008">
    <property type="entry name" value="Translation initiation factor IF-2"/>
    <property type="match status" value="1"/>
</dbReference>
<dbReference type="FunFam" id="3.40.50.10050:FF:000001">
    <property type="entry name" value="Translation initiation factor IF-2"/>
    <property type="match status" value="1"/>
</dbReference>
<dbReference type="FunFam" id="3.40.50.300:FF:000019">
    <property type="entry name" value="Translation initiation factor IF-2"/>
    <property type="match status" value="1"/>
</dbReference>
<dbReference type="Gene3D" id="1.10.10.2480">
    <property type="match status" value="1"/>
</dbReference>
<dbReference type="Gene3D" id="3.40.50.300">
    <property type="entry name" value="P-loop containing nucleotide triphosphate hydrolases"/>
    <property type="match status" value="1"/>
</dbReference>
<dbReference type="Gene3D" id="2.40.30.10">
    <property type="entry name" value="Translation factors"/>
    <property type="match status" value="2"/>
</dbReference>
<dbReference type="Gene3D" id="3.40.50.10050">
    <property type="entry name" value="Translation initiation factor IF- 2, domain 3"/>
    <property type="match status" value="1"/>
</dbReference>
<dbReference type="HAMAP" id="MF_00100_B">
    <property type="entry name" value="IF_2_B"/>
    <property type="match status" value="1"/>
</dbReference>
<dbReference type="InterPro" id="IPR053905">
    <property type="entry name" value="EF-G-like_DII"/>
</dbReference>
<dbReference type="InterPro" id="IPR044145">
    <property type="entry name" value="IF2_II"/>
</dbReference>
<dbReference type="InterPro" id="IPR006847">
    <property type="entry name" value="IF2_N"/>
</dbReference>
<dbReference type="InterPro" id="IPR027417">
    <property type="entry name" value="P-loop_NTPase"/>
</dbReference>
<dbReference type="InterPro" id="IPR005225">
    <property type="entry name" value="Small_GTP-bd"/>
</dbReference>
<dbReference type="InterPro" id="IPR000795">
    <property type="entry name" value="T_Tr_GTP-bd_dom"/>
</dbReference>
<dbReference type="InterPro" id="IPR000178">
    <property type="entry name" value="TF_IF2_bacterial-like"/>
</dbReference>
<dbReference type="InterPro" id="IPR015760">
    <property type="entry name" value="TIF_IF2"/>
</dbReference>
<dbReference type="InterPro" id="IPR023115">
    <property type="entry name" value="TIF_IF2_dom3"/>
</dbReference>
<dbReference type="InterPro" id="IPR036925">
    <property type="entry name" value="TIF_IF2_dom3_sf"/>
</dbReference>
<dbReference type="InterPro" id="IPR009000">
    <property type="entry name" value="Transl_B-barrel_sf"/>
</dbReference>
<dbReference type="NCBIfam" id="TIGR00487">
    <property type="entry name" value="IF-2"/>
    <property type="match status" value="1"/>
</dbReference>
<dbReference type="NCBIfam" id="TIGR00231">
    <property type="entry name" value="small_GTP"/>
    <property type="match status" value="1"/>
</dbReference>
<dbReference type="PANTHER" id="PTHR43381:SF5">
    <property type="entry name" value="TR-TYPE G DOMAIN-CONTAINING PROTEIN"/>
    <property type="match status" value="1"/>
</dbReference>
<dbReference type="PANTHER" id="PTHR43381">
    <property type="entry name" value="TRANSLATION INITIATION FACTOR IF-2-RELATED"/>
    <property type="match status" value="1"/>
</dbReference>
<dbReference type="Pfam" id="PF22042">
    <property type="entry name" value="EF-G_D2"/>
    <property type="match status" value="1"/>
</dbReference>
<dbReference type="Pfam" id="PF00009">
    <property type="entry name" value="GTP_EFTU"/>
    <property type="match status" value="1"/>
</dbReference>
<dbReference type="Pfam" id="PF11987">
    <property type="entry name" value="IF-2"/>
    <property type="match status" value="1"/>
</dbReference>
<dbReference type="Pfam" id="PF04760">
    <property type="entry name" value="IF2_N"/>
    <property type="match status" value="2"/>
</dbReference>
<dbReference type="SUPFAM" id="SSF52156">
    <property type="entry name" value="Initiation factor IF2/eIF5b, domain 3"/>
    <property type="match status" value="1"/>
</dbReference>
<dbReference type="SUPFAM" id="SSF52540">
    <property type="entry name" value="P-loop containing nucleoside triphosphate hydrolases"/>
    <property type="match status" value="1"/>
</dbReference>
<dbReference type="SUPFAM" id="SSF50447">
    <property type="entry name" value="Translation proteins"/>
    <property type="match status" value="2"/>
</dbReference>
<dbReference type="PROSITE" id="PS51722">
    <property type="entry name" value="G_TR_2"/>
    <property type="match status" value="1"/>
</dbReference>
<dbReference type="PROSITE" id="PS01176">
    <property type="entry name" value="IF2"/>
    <property type="match status" value="1"/>
</dbReference>
<name>IF2_STAA8</name>
<protein>
    <recommendedName>
        <fullName evidence="2">Translation initiation factor IF-2</fullName>
    </recommendedName>
</protein>
<proteinExistence type="inferred from homology"/>
<keyword id="KW-0963">Cytoplasm</keyword>
<keyword id="KW-0342">GTP-binding</keyword>
<keyword id="KW-0396">Initiation factor</keyword>
<keyword id="KW-0547">Nucleotide-binding</keyword>
<keyword id="KW-0648">Protein biosynthesis</keyword>
<keyword id="KW-1185">Reference proteome</keyword>
<sequence>MSKQRIYEYAKELNLKSKEIIDELKSMNIEVSNHMQALEDDQIKALDKKFKKEQKNDNKQSTQNNHQKSNNQNQNKGQQKDNKKNQQQNNKGNKGNKKNNRNNKKNNKNNKPQNQPAAPKEIPSKVTYQEGITVGEFADKLNVESSEIIKKLFLLGIVANINQSLNQETIELIADDYGVEVEEEVVINEEDLSIYFEDEKDDPEAIERPAVVTIMGHVDHGKTTLLDSIRHTKVTAGEAGGITQHIGAYQIENDGKKITFLDTPGHAAFTTMRARGAQVTDITILVVAADDGVMPQTIEAINHAKEAEVPIIVAVNKIDKPTSNPDRVMQELTEYGLIPEDWGGETIFVPLSALSGDGIDDLLEMIGLVAEVQELKANPKNRAVGTVIEAELDKSRGPSASLLVQNGTLNVGDAIVVGNTYGRIRAMVNDLGQRIKTAGPSTPVEITGINDVPQAGDRFVVFSDEKQARRIGESRHEASIIQQRQESKNVSLDNLFEQMKQGEMKDLNVIIKGDVQGSVEALAASLMKIDVEGVNVRIIHTAVGAINESDVTLANASNGIIIGFNVRPDSGAKRAAEAENVDMRLHRVIYNVIEEIESAMKGLLDPEFEEQVIGQAEVRQTFKVSKVGTIAGCYVTEGKITRNAGVRIIRDGIVQYEGELDTLKRFKDDAKEVAKGYECGITIENYNDLKEGDVIEAFEMVEIKR</sequence>
<evidence type="ECO:0000250" key="1"/>
<evidence type="ECO:0000255" key="2">
    <source>
        <dbReference type="HAMAP-Rule" id="MF_00100"/>
    </source>
</evidence>
<evidence type="ECO:0000256" key="3">
    <source>
        <dbReference type="SAM" id="MobiDB-lite"/>
    </source>
</evidence>
<reference key="1">
    <citation type="book" date="2006" name="Gram positive pathogens, 2nd edition">
        <title>The Staphylococcus aureus NCTC 8325 genome.</title>
        <editorList>
            <person name="Fischetti V."/>
            <person name="Novick R."/>
            <person name="Ferretti J."/>
            <person name="Portnoy D."/>
            <person name="Rood J."/>
        </editorList>
        <authorList>
            <person name="Gillaspy A.F."/>
            <person name="Worrell V."/>
            <person name="Orvis J."/>
            <person name="Roe B.A."/>
            <person name="Dyer D.W."/>
            <person name="Iandolo J.J."/>
        </authorList>
    </citation>
    <scope>NUCLEOTIDE SEQUENCE [LARGE SCALE GENOMIC DNA]</scope>
    <source>
        <strain>NCTC 8325 / PS 47</strain>
    </source>
</reference>